<organism>
    <name type="scientific">Oryza sativa subsp. indica</name>
    <name type="common">Rice</name>
    <dbReference type="NCBI Taxonomy" id="39946"/>
    <lineage>
        <taxon>Eukaryota</taxon>
        <taxon>Viridiplantae</taxon>
        <taxon>Streptophyta</taxon>
        <taxon>Embryophyta</taxon>
        <taxon>Tracheophyta</taxon>
        <taxon>Spermatophyta</taxon>
        <taxon>Magnoliopsida</taxon>
        <taxon>Liliopsida</taxon>
        <taxon>Poales</taxon>
        <taxon>Poaceae</taxon>
        <taxon>BOP clade</taxon>
        <taxon>Oryzoideae</taxon>
        <taxon>Oryzeae</taxon>
        <taxon>Oryzinae</taxon>
        <taxon>Oryza</taxon>
        <taxon>Oryza sativa</taxon>
    </lineage>
</organism>
<sequence>MLKLRLKRCGRKQRAVYRIVAIDVRSRREGRDLRKVGFYDPIKNQTCLNVPAILYFLEKGAQPTRTVSDILRKAEFFKEKERTLS</sequence>
<dbReference type="EMBL" id="AY522329">
    <property type="status" value="NOT_ANNOTATED_CDS"/>
    <property type="molecule type" value="Genomic_DNA"/>
</dbReference>
<dbReference type="SMR" id="P0C474"/>
<dbReference type="STRING" id="39946.P0C474"/>
<dbReference type="Proteomes" id="UP000007015">
    <property type="component" value="Chloroplast"/>
</dbReference>
<dbReference type="GO" id="GO:0009507">
    <property type="term" value="C:chloroplast"/>
    <property type="evidence" value="ECO:0007669"/>
    <property type="project" value="UniProtKB-SubCell"/>
</dbReference>
<dbReference type="GO" id="GO:0005739">
    <property type="term" value="C:mitochondrion"/>
    <property type="evidence" value="ECO:0007669"/>
    <property type="project" value="GOC"/>
</dbReference>
<dbReference type="GO" id="GO:0009536">
    <property type="term" value="C:plastid"/>
    <property type="evidence" value="ECO:0000305"/>
    <property type="project" value="Gramene"/>
</dbReference>
<dbReference type="GO" id="GO:0015935">
    <property type="term" value="C:small ribosomal subunit"/>
    <property type="evidence" value="ECO:0007669"/>
    <property type="project" value="TreeGrafter"/>
</dbReference>
<dbReference type="GO" id="GO:0003735">
    <property type="term" value="F:structural constituent of ribosome"/>
    <property type="evidence" value="ECO:0007669"/>
    <property type="project" value="InterPro"/>
</dbReference>
<dbReference type="GO" id="GO:0032543">
    <property type="term" value="P:mitochondrial translation"/>
    <property type="evidence" value="ECO:0007669"/>
    <property type="project" value="TreeGrafter"/>
</dbReference>
<dbReference type="FunFam" id="3.30.1320.10:FF:000003">
    <property type="entry name" value="30S ribosomal protein S16, chloroplastic"/>
    <property type="match status" value="1"/>
</dbReference>
<dbReference type="Gene3D" id="3.30.1320.10">
    <property type="match status" value="1"/>
</dbReference>
<dbReference type="HAMAP" id="MF_00385">
    <property type="entry name" value="Ribosomal_bS16"/>
    <property type="match status" value="1"/>
</dbReference>
<dbReference type="InterPro" id="IPR000307">
    <property type="entry name" value="Ribosomal_bS16"/>
</dbReference>
<dbReference type="InterPro" id="IPR020592">
    <property type="entry name" value="Ribosomal_bS16_CS"/>
</dbReference>
<dbReference type="InterPro" id="IPR023803">
    <property type="entry name" value="Ribosomal_bS16_dom_sf"/>
</dbReference>
<dbReference type="NCBIfam" id="TIGR00002">
    <property type="entry name" value="S16"/>
    <property type="match status" value="1"/>
</dbReference>
<dbReference type="PANTHER" id="PTHR12919">
    <property type="entry name" value="30S RIBOSOMAL PROTEIN S16"/>
    <property type="match status" value="1"/>
</dbReference>
<dbReference type="PANTHER" id="PTHR12919:SF20">
    <property type="entry name" value="SMALL RIBOSOMAL SUBUNIT PROTEIN BS16M"/>
    <property type="match status" value="1"/>
</dbReference>
<dbReference type="Pfam" id="PF00886">
    <property type="entry name" value="Ribosomal_S16"/>
    <property type="match status" value="1"/>
</dbReference>
<dbReference type="SUPFAM" id="SSF54565">
    <property type="entry name" value="Ribosomal protein S16"/>
    <property type="match status" value="1"/>
</dbReference>
<dbReference type="PROSITE" id="PS00732">
    <property type="entry name" value="RIBOSOMAL_S16"/>
    <property type="match status" value="1"/>
</dbReference>
<feature type="chain" id="PRO_0000290074" description="Small ribosomal subunit protein bS16c">
    <location>
        <begin position="1"/>
        <end position="85"/>
    </location>
</feature>
<comment type="subcellular location">
    <subcellularLocation>
        <location>Plastid</location>
        <location>Chloroplast</location>
    </subcellularLocation>
</comment>
<comment type="similarity">
    <text evidence="1">Belongs to the bacterial ribosomal protein bS16 family.</text>
</comment>
<proteinExistence type="inferred from homology"/>
<keyword id="KW-0150">Chloroplast</keyword>
<keyword id="KW-0934">Plastid</keyword>
<keyword id="KW-1185">Reference proteome</keyword>
<keyword id="KW-0687">Ribonucleoprotein</keyword>
<keyword id="KW-0689">Ribosomal protein</keyword>
<name>RR16_ORYSI</name>
<geneLocation type="chloroplast"/>
<protein>
    <recommendedName>
        <fullName evidence="1">Small ribosomal subunit protein bS16c</fullName>
    </recommendedName>
    <alternativeName>
        <fullName evidence="2">30S ribosomal protein S16, chloroplastic</fullName>
    </alternativeName>
</protein>
<gene>
    <name evidence="1" type="primary">rps16</name>
</gene>
<evidence type="ECO:0000255" key="1">
    <source>
        <dbReference type="HAMAP-Rule" id="MF_00385"/>
    </source>
</evidence>
<evidence type="ECO:0000305" key="2"/>
<accession>P0C474</accession>
<reference key="1">
    <citation type="journal article" date="2004" name="Plant Physiol.">
        <title>A comparison of rice chloroplast genomes.</title>
        <authorList>
            <person name="Tang J."/>
            <person name="Xia H."/>
            <person name="Cao M."/>
            <person name="Zhang X."/>
            <person name="Zeng W."/>
            <person name="Hu S."/>
            <person name="Tong W."/>
            <person name="Wang J."/>
            <person name="Wang J."/>
            <person name="Yu J."/>
            <person name="Yang H."/>
            <person name="Zhu L."/>
        </authorList>
    </citation>
    <scope>NUCLEOTIDE SEQUENCE [LARGE SCALE GENOMIC DNA]</scope>
    <source>
        <strain>cv. 93-11</strain>
    </source>
</reference>